<keyword id="KW-0342">GTP-binding</keyword>
<keyword id="KW-0396">Initiation factor</keyword>
<keyword id="KW-0547">Nucleotide-binding</keyword>
<keyword id="KW-0648">Protein biosynthesis</keyword>
<dbReference type="EMBL" id="CP000742">
    <property type="protein sequence ID" value="ABR55193.1"/>
    <property type="molecule type" value="Genomic_DNA"/>
</dbReference>
<dbReference type="RefSeq" id="WP_012066108.1">
    <property type="nucleotide sequence ID" value="NC_009634.1"/>
</dbReference>
<dbReference type="SMR" id="A6URS1"/>
<dbReference type="STRING" id="406327.Mevan_1296"/>
<dbReference type="GeneID" id="5324779"/>
<dbReference type="KEGG" id="mvn:Mevan_1296"/>
<dbReference type="eggNOG" id="arCOG01560">
    <property type="taxonomic scope" value="Archaea"/>
</dbReference>
<dbReference type="HOGENOM" id="CLU_002656_3_3_2"/>
<dbReference type="OrthoDB" id="30957at2157"/>
<dbReference type="Proteomes" id="UP000001107">
    <property type="component" value="Chromosome"/>
</dbReference>
<dbReference type="GO" id="GO:0005737">
    <property type="term" value="C:cytoplasm"/>
    <property type="evidence" value="ECO:0007669"/>
    <property type="project" value="TreeGrafter"/>
</dbReference>
<dbReference type="GO" id="GO:0005525">
    <property type="term" value="F:GTP binding"/>
    <property type="evidence" value="ECO:0007669"/>
    <property type="project" value="UniProtKB-KW"/>
</dbReference>
<dbReference type="GO" id="GO:0003924">
    <property type="term" value="F:GTPase activity"/>
    <property type="evidence" value="ECO:0007669"/>
    <property type="project" value="UniProtKB-UniRule"/>
</dbReference>
<dbReference type="GO" id="GO:0003743">
    <property type="term" value="F:translation initiation factor activity"/>
    <property type="evidence" value="ECO:0007669"/>
    <property type="project" value="UniProtKB-UniRule"/>
</dbReference>
<dbReference type="CDD" id="cd03703">
    <property type="entry name" value="aeIF5B_II"/>
    <property type="match status" value="1"/>
</dbReference>
<dbReference type="CDD" id="cd16266">
    <property type="entry name" value="IF2_aeIF5B_IV"/>
    <property type="match status" value="1"/>
</dbReference>
<dbReference type="CDD" id="cd01887">
    <property type="entry name" value="IF2_eIF5B"/>
    <property type="match status" value="1"/>
</dbReference>
<dbReference type="FunFam" id="3.40.50.300:FF:000112">
    <property type="entry name" value="Eukaryotic translation initiation factor 5B"/>
    <property type="match status" value="1"/>
</dbReference>
<dbReference type="FunFam" id="3.40.50.10050:FF:000001">
    <property type="entry name" value="Translation initiation factor IF-2"/>
    <property type="match status" value="1"/>
</dbReference>
<dbReference type="Gene3D" id="3.40.50.300">
    <property type="entry name" value="P-loop containing nucleotide triphosphate hydrolases"/>
    <property type="match status" value="1"/>
</dbReference>
<dbReference type="Gene3D" id="2.40.30.10">
    <property type="entry name" value="Translation factors"/>
    <property type="match status" value="2"/>
</dbReference>
<dbReference type="Gene3D" id="3.40.50.10050">
    <property type="entry name" value="Translation initiation factor IF- 2, domain 3"/>
    <property type="match status" value="1"/>
</dbReference>
<dbReference type="HAMAP" id="MF_00100_A">
    <property type="entry name" value="IF_2_A"/>
    <property type="match status" value="1"/>
</dbReference>
<dbReference type="InterPro" id="IPR029459">
    <property type="entry name" value="EFTU-type"/>
</dbReference>
<dbReference type="InterPro" id="IPR027417">
    <property type="entry name" value="P-loop_NTPase"/>
</dbReference>
<dbReference type="InterPro" id="IPR005225">
    <property type="entry name" value="Small_GTP-bd"/>
</dbReference>
<dbReference type="InterPro" id="IPR000795">
    <property type="entry name" value="T_Tr_GTP-bd_dom"/>
</dbReference>
<dbReference type="InterPro" id="IPR004544">
    <property type="entry name" value="TF_aIF-2_arc"/>
</dbReference>
<dbReference type="InterPro" id="IPR015760">
    <property type="entry name" value="TIF_IF2"/>
</dbReference>
<dbReference type="InterPro" id="IPR023115">
    <property type="entry name" value="TIF_IF2_dom3"/>
</dbReference>
<dbReference type="InterPro" id="IPR036925">
    <property type="entry name" value="TIF_IF2_dom3_sf"/>
</dbReference>
<dbReference type="InterPro" id="IPR009000">
    <property type="entry name" value="Transl_B-barrel_sf"/>
</dbReference>
<dbReference type="NCBIfam" id="TIGR00491">
    <property type="entry name" value="aIF-2"/>
    <property type="match status" value="1"/>
</dbReference>
<dbReference type="NCBIfam" id="NF003078">
    <property type="entry name" value="PRK04004.1"/>
    <property type="match status" value="1"/>
</dbReference>
<dbReference type="NCBIfam" id="NF011418">
    <property type="entry name" value="PRK14845.1"/>
    <property type="match status" value="1"/>
</dbReference>
<dbReference type="NCBIfam" id="TIGR00231">
    <property type="entry name" value="small_GTP"/>
    <property type="match status" value="1"/>
</dbReference>
<dbReference type="PANTHER" id="PTHR43381:SF4">
    <property type="entry name" value="EUKARYOTIC TRANSLATION INITIATION FACTOR 5B"/>
    <property type="match status" value="1"/>
</dbReference>
<dbReference type="PANTHER" id="PTHR43381">
    <property type="entry name" value="TRANSLATION INITIATION FACTOR IF-2-RELATED"/>
    <property type="match status" value="1"/>
</dbReference>
<dbReference type="Pfam" id="PF00009">
    <property type="entry name" value="GTP_EFTU"/>
    <property type="match status" value="1"/>
</dbReference>
<dbReference type="Pfam" id="PF14578">
    <property type="entry name" value="GTP_EFTU_D4"/>
    <property type="match status" value="1"/>
</dbReference>
<dbReference type="Pfam" id="PF11987">
    <property type="entry name" value="IF-2"/>
    <property type="match status" value="1"/>
</dbReference>
<dbReference type="PRINTS" id="PR00315">
    <property type="entry name" value="ELONGATNFCT"/>
</dbReference>
<dbReference type="SUPFAM" id="SSF52156">
    <property type="entry name" value="Initiation factor IF2/eIF5b, domain 3"/>
    <property type="match status" value="1"/>
</dbReference>
<dbReference type="SUPFAM" id="SSF52540">
    <property type="entry name" value="P-loop containing nucleoside triphosphate hydrolases"/>
    <property type="match status" value="1"/>
</dbReference>
<dbReference type="SUPFAM" id="SSF50447">
    <property type="entry name" value="Translation proteins"/>
    <property type="match status" value="1"/>
</dbReference>
<dbReference type="PROSITE" id="PS51722">
    <property type="entry name" value="G_TR_2"/>
    <property type="match status" value="1"/>
</dbReference>
<sequence length="598" mass="66229">MALRCPIVSVLGHVDHGKTSLLDKIRSTRVTQREAGGITQHIGASEIPINTIKKVSKDLLGLFNANLSIPGLLVIDTPGHEAFTSLRKRGGALADIAILVVDINEGFKPQTIEAINILKQCKTPFVVAANKLDRIPGWSSSNGPFILNFNEKVQHPNAMTEFEIRLYENVIKHLNELGFDADLFSRVKDTTRTINVVPVSAITGEGVPDLLIIIAGLAQKFLEQKLALNVEGYAKGTVLEVKEEKGLGRTIDAIIYDGIARTGDYIVIGNPDGIVTSKVKALLKPKELDEMRDPKDKFKPSREISAATGVKISAPELEMVVSGSPLRIVPKEHINKAMDEITEEIEEFTIKTDEEGIIIKADTMGSLEAIANELRKAKANIKKAEVGDVSKKDIIEASSYSSSDPLNGLIISFNTKTLPDAKLELEKTDVKLLEGKIIYKLVEDYGAWLKEMEELLKSDELNKLTKPAMIKILPNCIFRQKGPAVCGVEILYGTLKIGSHIMSDDGKKLGYVKEIRNNQQENIKEAKVGMQVPVSIDGNMILGRNAKENDILYVEVSEPEVRKLYHIYKDELRGDEKEALLRYMELKQKLEKSIFWGM</sequence>
<evidence type="ECO:0000250" key="1"/>
<evidence type="ECO:0000255" key="2">
    <source>
        <dbReference type="HAMAP-Rule" id="MF_00100"/>
    </source>
</evidence>
<name>IF2P_METVS</name>
<gene>
    <name evidence="2" type="primary">infB</name>
    <name type="ordered locus">Mevan_1296</name>
</gene>
<reference key="1">
    <citation type="submission" date="2007-06" db="EMBL/GenBank/DDBJ databases">
        <title>Complete sequence of Methanococcus vannielii SB.</title>
        <authorList>
            <consortium name="US DOE Joint Genome Institute"/>
            <person name="Copeland A."/>
            <person name="Lucas S."/>
            <person name="Lapidus A."/>
            <person name="Barry K."/>
            <person name="Glavina del Rio T."/>
            <person name="Dalin E."/>
            <person name="Tice H."/>
            <person name="Pitluck S."/>
            <person name="Chain P."/>
            <person name="Malfatti S."/>
            <person name="Shin M."/>
            <person name="Vergez L."/>
            <person name="Schmutz J."/>
            <person name="Larimer F."/>
            <person name="Land M."/>
            <person name="Hauser L."/>
            <person name="Kyrpides N."/>
            <person name="Anderson I."/>
            <person name="Sieprawska-Lupa M."/>
            <person name="Whitman W.B."/>
            <person name="Richardson P."/>
        </authorList>
    </citation>
    <scope>NUCLEOTIDE SEQUENCE [LARGE SCALE GENOMIC DNA]</scope>
    <source>
        <strain>ATCC 35089 / DSM 1224 / JCM 13029 / OCM 148 / SB</strain>
    </source>
</reference>
<proteinExistence type="inferred from homology"/>
<protein>
    <recommendedName>
        <fullName evidence="2">Probable translation initiation factor IF-2</fullName>
    </recommendedName>
</protein>
<comment type="function">
    <text evidence="2">Function in general translation initiation by promoting the binding of the formylmethionine-tRNA to ribosomes. Seems to function along with eIF-2.</text>
</comment>
<comment type="similarity">
    <text evidence="2">Belongs to the TRAFAC class translation factor GTPase superfamily. Classic translation factor GTPase family. IF-2 subfamily.</text>
</comment>
<organism>
    <name type="scientific">Methanococcus vannielii (strain ATCC 35089 / DSM 1224 / JCM 13029 / OCM 148 / SB)</name>
    <dbReference type="NCBI Taxonomy" id="406327"/>
    <lineage>
        <taxon>Archaea</taxon>
        <taxon>Methanobacteriati</taxon>
        <taxon>Methanobacteriota</taxon>
        <taxon>Methanomada group</taxon>
        <taxon>Methanococci</taxon>
        <taxon>Methanococcales</taxon>
        <taxon>Methanococcaceae</taxon>
        <taxon>Methanococcus</taxon>
    </lineage>
</organism>
<accession>A6URS1</accession>
<feature type="chain" id="PRO_1000008276" description="Probable translation initiation factor IF-2">
    <location>
        <begin position="1"/>
        <end position="598"/>
    </location>
</feature>
<feature type="domain" description="tr-type G">
    <location>
        <begin position="3"/>
        <end position="225"/>
    </location>
</feature>
<feature type="region of interest" description="G1" evidence="1">
    <location>
        <begin position="12"/>
        <end position="19"/>
    </location>
</feature>
<feature type="region of interest" description="G2" evidence="1">
    <location>
        <begin position="37"/>
        <end position="41"/>
    </location>
</feature>
<feature type="region of interest" description="G3" evidence="1">
    <location>
        <begin position="76"/>
        <end position="79"/>
    </location>
</feature>
<feature type="region of interest" description="G4" evidence="1">
    <location>
        <begin position="130"/>
        <end position="133"/>
    </location>
</feature>
<feature type="region of interest" description="G5" evidence="1">
    <location>
        <begin position="200"/>
        <end position="202"/>
    </location>
</feature>
<feature type="binding site" evidence="2">
    <location>
        <begin position="12"/>
        <end position="19"/>
    </location>
    <ligand>
        <name>GTP</name>
        <dbReference type="ChEBI" id="CHEBI:37565"/>
    </ligand>
</feature>
<feature type="binding site" evidence="2">
    <location>
        <begin position="76"/>
        <end position="80"/>
    </location>
    <ligand>
        <name>GTP</name>
        <dbReference type="ChEBI" id="CHEBI:37565"/>
    </ligand>
</feature>
<feature type="binding site" evidence="2">
    <location>
        <begin position="130"/>
        <end position="133"/>
    </location>
    <ligand>
        <name>GTP</name>
        <dbReference type="ChEBI" id="CHEBI:37565"/>
    </ligand>
</feature>